<sequence>MANLDLSKYGIVDVKEIVHNPSYDVLFAEETKPSLEGFEKGQVTELGAVNVMTGIYTGRSPKDKFFVKNEASEDSVWWTSDEYKNDNKPCSEAAWADLKAKAVKELSGKRLFVVDTFCGANEATRLKVRFIMEVAWQAHFVTNMFIRPTAEELANYGEPDFVSFNAAKAKVDNYKELGLNSETATVFNLKTKEQVILNTWYGGEMKKGIFSIMNYLNPLRGIASMHCSANTDKEGKSSAIFFGLSGTGKTTLSTDPKRLLIGDDEHGWDNEGVFNYEGGCYAKVINLDKESEPDIYNAIKRDALLENVTVAADGKIDFADKSVTENTRVSYPIYHIENIVKPVSKGPHAKQVIFLSADAFGVLPPVSILTPEQTQYYFLSGFTAKLAGTERGITEPTPTFSACFGAAFLSLHPTKYGEELVKKMEMTGAKAYLVNTGWNGSGKRISIKDTRGIIDAILDGSINEAPTKKIPYFDFEVPTALPGVDPKILDPRDTYADPAQWDEKAKDLAARFQKNFAKFTGNEAGKALVAAGPQL</sequence>
<gene>
    <name evidence="1" type="primary">pckA</name>
    <name type="ordered locus">BDI_2805</name>
</gene>
<feature type="chain" id="PRO_1000026334" description="Phosphoenolpyruvate carboxykinase (ATP)">
    <location>
        <begin position="1"/>
        <end position="535"/>
    </location>
</feature>
<feature type="binding site" evidence="1">
    <location>
        <position position="59"/>
    </location>
    <ligand>
        <name>substrate</name>
    </ligand>
</feature>
<feature type="binding site" evidence="1">
    <location>
        <position position="201"/>
    </location>
    <ligand>
        <name>substrate</name>
    </ligand>
</feature>
<feature type="binding site" evidence="1">
    <location>
        <position position="207"/>
    </location>
    <ligand>
        <name>ATP</name>
        <dbReference type="ChEBI" id="CHEBI:30616"/>
    </ligand>
</feature>
<feature type="binding site" evidence="1">
    <location>
        <position position="207"/>
    </location>
    <ligand>
        <name>Mn(2+)</name>
        <dbReference type="ChEBI" id="CHEBI:29035"/>
    </ligand>
</feature>
<feature type="binding site" evidence="1">
    <location>
        <position position="207"/>
    </location>
    <ligand>
        <name>substrate</name>
    </ligand>
</feature>
<feature type="binding site" evidence="1">
    <location>
        <position position="226"/>
    </location>
    <ligand>
        <name>ATP</name>
        <dbReference type="ChEBI" id="CHEBI:30616"/>
    </ligand>
</feature>
<feature type="binding site" evidence="1">
    <location>
        <position position="226"/>
    </location>
    <ligand>
        <name>Mn(2+)</name>
        <dbReference type="ChEBI" id="CHEBI:29035"/>
    </ligand>
</feature>
<feature type="binding site" evidence="1">
    <location>
        <begin position="243"/>
        <end position="251"/>
    </location>
    <ligand>
        <name>ATP</name>
        <dbReference type="ChEBI" id="CHEBI:30616"/>
    </ligand>
</feature>
<feature type="binding site" evidence="1">
    <location>
        <position position="264"/>
    </location>
    <ligand>
        <name>Mn(2+)</name>
        <dbReference type="ChEBI" id="CHEBI:29035"/>
    </ligand>
</feature>
<feature type="binding site" evidence="1">
    <location>
        <position position="292"/>
    </location>
    <ligand>
        <name>ATP</name>
        <dbReference type="ChEBI" id="CHEBI:30616"/>
    </ligand>
</feature>
<feature type="binding site" evidence="1">
    <location>
        <position position="328"/>
    </location>
    <ligand>
        <name>ATP</name>
        <dbReference type="ChEBI" id="CHEBI:30616"/>
    </ligand>
</feature>
<feature type="binding site" evidence="1">
    <location>
        <position position="328"/>
    </location>
    <ligand>
        <name>substrate</name>
    </ligand>
</feature>
<feature type="binding site" evidence="1">
    <location>
        <begin position="444"/>
        <end position="445"/>
    </location>
    <ligand>
        <name>ATP</name>
        <dbReference type="ChEBI" id="CHEBI:30616"/>
    </ligand>
</feature>
<feature type="binding site" evidence="1">
    <location>
        <position position="450"/>
    </location>
    <ligand>
        <name>ATP</name>
        <dbReference type="ChEBI" id="CHEBI:30616"/>
    </ligand>
</feature>
<keyword id="KW-0067">ATP-binding</keyword>
<keyword id="KW-0963">Cytoplasm</keyword>
<keyword id="KW-0210">Decarboxylase</keyword>
<keyword id="KW-0312">Gluconeogenesis</keyword>
<keyword id="KW-0456">Lyase</keyword>
<keyword id="KW-0464">Manganese</keyword>
<keyword id="KW-0479">Metal-binding</keyword>
<keyword id="KW-0547">Nucleotide-binding</keyword>
<keyword id="KW-1185">Reference proteome</keyword>
<comment type="function">
    <text evidence="1">Involved in the gluconeogenesis. Catalyzes the conversion of oxaloacetate (OAA) to phosphoenolpyruvate (PEP) through direct phosphoryl transfer between the nucleoside triphosphate and OAA.</text>
</comment>
<comment type="catalytic activity">
    <reaction evidence="1">
        <text>oxaloacetate + ATP = phosphoenolpyruvate + ADP + CO2</text>
        <dbReference type="Rhea" id="RHEA:18617"/>
        <dbReference type="ChEBI" id="CHEBI:16452"/>
        <dbReference type="ChEBI" id="CHEBI:16526"/>
        <dbReference type="ChEBI" id="CHEBI:30616"/>
        <dbReference type="ChEBI" id="CHEBI:58702"/>
        <dbReference type="ChEBI" id="CHEBI:456216"/>
        <dbReference type="EC" id="4.1.1.49"/>
    </reaction>
</comment>
<comment type="cofactor">
    <cofactor evidence="1">
        <name>Mn(2+)</name>
        <dbReference type="ChEBI" id="CHEBI:29035"/>
    </cofactor>
    <text evidence="1">Binds 1 Mn(2+) ion per subunit.</text>
</comment>
<comment type="pathway">
    <text evidence="1">Carbohydrate biosynthesis; gluconeogenesis.</text>
</comment>
<comment type="subcellular location">
    <subcellularLocation>
        <location evidence="1">Cytoplasm</location>
    </subcellularLocation>
</comment>
<comment type="similarity">
    <text evidence="1">Belongs to the phosphoenolpyruvate carboxykinase (ATP) family.</text>
</comment>
<evidence type="ECO:0000255" key="1">
    <source>
        <dbReference type="HAMAP-Rule" id="MF_00453"/>
    </source>
</evidence>
<protein>
    <recommendedName>
        <fullName evidence="1">Phosphoenolpyruvate carboxykinase (ATP)</fullName>
        <shortName evidence="1">PCK</shortName>
        <shortName evidence="1">PEP carboxykinase</shortName>
        <shortName evidence="1">PEPCK</shortName>
        <ecNumber evidence="1">4.1.1.49</ecNumber>
    </recommendedName>
</protein>
<organism>
    <name type="scientific">Parabacteroides distasonis (strain ATCC 8503 / DSM 20701 / CIP 104284 / JCM 5825 / NCTC 11152)</name>
    <dbReference type="NCBI Taxonomy" id="435591"/>
    <lineage>
        <taxon>Bacteria</taxon>
        <taxon>Pseudomonadati</taxon>
        <taxon>Bacteroidota</taxon>
        <taxon>Bacteroidia</taxon>
        <taxon>Bacteroidales</taxon>
        <taxon>Tannerellaceae</taxon>
        <taxon>Parabacteroides</taxon>
    </lineage>
</organism>
<reference key="1">
    <citation type="journal article" date="2007" name="PLoS Biol.">
        <title>Evolution of symbiotic bacteria in the distal human intestine.</title>
        <authorList>
            <person name="Xu J."/>
            <person name="Mahowald M.A."/>
            <person name="Ley R.E."/>
            <person name="Lozupone C.A."/>
            <person name="Hamady M."/>
            <person name="Martens E.C."/>
            <person name="Henrissat B."/>
            <person name="Coutinho P.M."/>
            <person name="Minx P."/>
            <person name="Latreille P."/>
            <person name="Cordum H."/>
            <person name="Van Brunt A."/>
            <person name="Kim K."/>
            <person name="Fulton R.S."/>
            <person name="Fulton L.A."/>
            <person name="Clifton S.W."/>
            <person name="Wilson R.K."/>
            <person name="Knight R.D."/>
            <person name="Gordon J.I."/>
        </authorList>
    </citation>
    <scope>NUCLEOTIDE SEQUENCE [LARGE SCALE GENOMIC DNA]</scope>
    <source>
        <strain>ATCC 8503 / DSM 20701 / CIP 104284 / JCM 5825 / NCTC 11152</strain>
    </source>
</reference>
<dbReference type="EC" id="4.1.1.49" evidence="1"/>
<dbReference type="EMBL" id="CP000140">
    <property type="protein sequence ID" value="ABR44518.1"/>
    <property type="molecule type" value="Genomic_DNA"/>
</dbReference>
<dbReference type="RefSeq" id="WP_005860732.1">
    <property type="nucleotide sequence ID" value="NZ_LR215978.1"/>
</dbReference>
<dbReference type="SMR" id="A6LFQ4"/>
<dbReference type="STRING" id="435591.BDI_2805"/>
<dbReference type="PaxDb" id="435591-BDI_2805"/>
<dbReference type="GeneID" id="93522818"/>
<dbReference type="KEGG" id="pdi:BDI_2805"/>
<dbReference type="eggNOG" id="COG1866">
    <property type="taxonomic scope" value="Bacteria"/>
</dbReference>
<dbReference type="HOGENOM" id="CLU_018247_0_1_10"/>
<dbReference type="BioCyc" id="PDIS435591:G1G5A-2880-MONOMER"/>
<dbReference type="UniPathway" id="UPA00138"/>
<dbReference type="Proteomes" id="UP000000566">
    <property type="component" value="Chromosome"/>
</dbReference>
<dbReference type="GO" id="GO:0005829">
    <property type="term" value="C:cytosol"/>
    <property type="evidence" value="ECO:0007669"/>
    <property type="project" value="TreeGrafter"/>
</dbReference>
<dbReference type="GO" id="GO:0005524">
    <property type="term" value="F:ATP binding"/>
    <property type="evidence" value="ECO:0007669"/>
    <property type="project" value="UniProtKB-UniRule"/>
</dbReference>
<dbReference type="GO" id="GO:0046872">
    <property type="term" value="F:metal ion binding"/>
    <property type="evidence" value="ECO:0007669"/>
    <property type="project" value="UniProtKB-KW"/>
</dbReference>
<dbReference type="GO" id="GO:0004612">
    <property type="term" value="F:phosphoenolpyruvate carboxykinase (ATP) activity"/>
    <property type="evidence" value="ECO:0007669"/>
    <property type="project" value="UniProtKB-UniRule"/>
</dbReference>
<dbReference type="GO" id="GO:0006094">
    <property type="term" value="P:gluconeogenesis"/>
    <property type="evidence" value="ECO:0007669"/>
    <property type="project" value="UniProtKB-UniRule"/>
</dbReference>
<dbReference type="CDD" id="cd00484">
    <property type="entry name" value="PEPCK_ATP"/>
    <property type="match status" value="1"/>
</dbReference>
<dbReference type="FunFam" id="2.170.8.10:FF:000001">
    <property type="entry name" value="Phosphoenolpyruvate carboxykinase (ATP)"/>
    <property type="match status" value="1"/>
</dbReference>
<dbReference type="FunFam" id="3.40.449.10:FF:000001">
    <property type="entry name" value="Phosphoenolpyruvate carboxykinase (ATP)"/>
    <property type="match status" value="1"/>
</dbReference>
<dbReference type="Gene3D" id="3.90.228.20">
    <property type="match status" value="1"/>
</dbReference>
<dbReference type="Gene3D" id="3.40.449.10">
    <property type="entry name" value="Phosphoenolpyruvate Carboxykinase, domain 1"/>
    <property type="match status" value="1"/>
</dbReference>
<dbReference type="Gene3D" id="2.170.8.10">
    <property type="entry name" value="Phosphoenolpyruvate Carboxykinase, domain 2"/>
    <property type="match status" value="1"/>
</dbReference>
<dbReference type="HAMAP" id="MF_00453">
    <property type="entry name" value="PEPCK_ATP"/>
    <property type="match status" value="1"/>
</dbReference>
<dbReference type="InterPro" id="IPR001272">
    <property type="entry name" value="PEP_carboxykinase_ATP"/>
</dbReference>
<dbReference type="InterPro" id="IPR013035">
    <property type="entry name" value="PEP_carboxykinase_C"/>
</dbReference>
<dbReference type="InterPro" id="IPR008210">
    <property type="entry name" value="PEP_carboxykinase_N"/>
</dbReference>
<dbReference type="InterPro" id="IPR015994">
    <property type="entry name" value="PEPCK_ATP_CS"/>
</dbReference>
<dbReference type="NCBIfam" id="TIGR00224">
    <property type="entry name" value="pckA"/>
    <property type="match status" value="1"/>
</dbReference>
<dbReference type="NCBIfam" id="NF006819">
    <property type="entry name" value="PRK09344.1-1"/>
    <property type="match status" value="1"/>
</dbReference>
<dbReference type="NCBIfam" id="NF006820">
    <property type="entry name" value="PRK09344.1-2"/>
    <property type="match status" value="1"/>
</dbReference>
<dbReference type="NCBIfam" id="NF006821">
    <property type="entry name" value="PRK09344.1-3"/>
    <property type="match status" value="1"/>
</dbReference>
<dbReference type="PANTHER" id="PTHR30031:SF0">
    <property type="entry name" value="PHOSPHOENOLPYRUVATE CARBOXYKINASE (ATP)"/>
    <property type="match status" value="1"/>
</dbReference>
<dbReference type="PANTHER" id="PTHR30031">
    <property type="entry name" value="PHOSPHOENOLPYRUVATE CARBOXYKINASE ATP"/>
    <property type="match status" value="1"/>
</dbReference>
<dbReference type="Pfam" id="PF01293">
    <property type="entry name" value="PEPCK_ATP"/>
    <property type="match status" value="1"/>
</dbReference>
<dbReference type="PIRSF" id="PIRSF006294">
    <property type="entry name" value="PEP_crbxkin"/>
    <property type="match status" value="1"/>
</dbReference>
<dbReference type="SUPFAM" id="SSF68923">
    <property type="entry name" value="PEP carboxykinase N-terminal domain"/>
    <property type="match status" value="1"/>
</dbReference>
<dbReference type="SUPFAM" id="SSF53795">
    <property type="entry name" value="PEP carboxykinase-like"/>
    <property type="match status" value="1"/>
</dbReference>
<dbReference type="PROSITE" id="PS00532">
    <property type="entry name" value="PEPCK_ATP"/>
    <property type="match status" value="1"/>
</dbReference>
<proteinExistence type="inferred from homology"/>
<accession>A6LFQ4</accession>
<name>PCKA_PARD8</name>